<feature type="signal peptide" evidence="5">
    <location>
        <begin position="1"/>
        <end position="19"/>
    </location>
</feature>
<feature type="chain" id="PRO_0000032824" description="Superoxide dismutase [Cu-Zn]">
    <location>
        <begin position="20"/>
        <end position="173"/>
    </location>
</feature>
<feature type="region of interest" description="Disordered" evidence="1">
    <location>
        <begin position="72"/>
        <end position="113"/>
    </location>
</feature>
<feature type="binding site" evidence="6">
    <location>
        <position position="67"/>
    </location>
    <ligand>
        <name>Cu cation</name>
        <dbReference type="ChEBI" id="CHEBI:23378"/>
        <note>catalytic</note>
    </ligand>
</feature>
<feature type="binding site" evidence="6">
    <location>
        <position position="69"/>
    </location>
    <ligand>
        <name>Cu cation</name>
        <dbReference type="ChEBI" id="CHEBI:23378"/>
        <note>catalytic</note>
    </ligand>
</feature>
<feature type="binding site" evidence="6">
    <location>
        <position position="92"/>
    </location>
    <ligand>
        <name>Cu cation</name>
        <dbReference type="ChEBI" id="CHEBI:23378"/>
        <note>catalytic</note>
    </ligand>
</feature>
<feature type="binding site" evidence="6">
    <location>
        <position position="92"/>
    </location>
    <ligand>
        <name>Zn(2+)</name>
        <dbReference type="ChEBI" id="CHEBI:29105"/>
        <note>structural</note>
    </ligand>
</feature>
<feature type="binding site" evidence="6">
    <location>
        <position position="101"/>
    </location>
    <ligand>
        <name>Zn(2+)</name>
        <dbReference type="ChEBI" id="CHEBI:29105"/>
        <note>structural</note>
    </ligand>
</feature>
<feature type="binding site" evidence="6">
    <location>
        <position position="109"/>
    </location>
    <ligand>
        <name>Zn(2+)</name>
        <dbReference type="ChEBI" id="CHEBI:29105"/>
        <note>structural</note>
    </ligand>
</feature>
<feature type="binding site" evidence="6">
    <location>
        <position position="112"/>
    </location>
    <ligand>
        <name>Zn(2+)</name>
        <dbReference type="ChEBI" id="CHEBI:29105"/>
        <note>structural</note>
    </ligand>
</feature>
<feature type="binding site" evidence="6">
    <location>
        <position position="147"/>
    </location>
    <ligand>
        <name>Cu cation</name>
        <dbReference type="ChEBI" id="CHEBI:23378"/>
        <note>catalytic</note>
    </ligand>
</feature>
<feature type="disulfide bond" evidence="6">
    <location>
        <begin position="74"/>
        <end position="169"/>
    </location>
</feature>
<feature type="strand" evidence="8">
    <location>
        <begin position="21"/>
        <end position="30"/>
    </location>
</feature>
<feature type="strand" evidence="8">
    <location>
        <begin position="33"/>
        <end position="46"/>
    </location>
</feature>
<feature type="strand" evidence="8">
    <location>
        <begin position="49"/>
        <end position="56"/>
    </location>
</feature>
<feature type="strand" evidence="8">
    <location>
        <begin position="61"/>
        <end position="64"/>
    </location>
</feature>
<feature type="strand" evidence="8">
    <location>
        <begin position="66"/>
        <end position="72"/>
    </location>
</feature>
<feature type="strand" evidence="8">
    <location>
        <begin position="80"/>
        <end position="82"/>
    </location>
</feature>
<feature type="helix" evidence="8">
    <location>
        <begin position="87"/>
        <end position="89"/>
    </location>
</feature>
<feature type="strand" evidence="8">
    <location>
        <begin position="106"/>
        <end position="108"/>
    </location>
</feature>
<feature type="strand" evidence="8">
    <location>
        <begin position="116"/>
        <end position="118"/>
    </location>
</feature>
<feature type="strand" evidence="8">
    <location>
        <begin position="128"/>
        <end position="130"/>
    </location>
</feature>
<feature type="helix" evidence="8">
    <location>
        <begin position="136"/>
        <end position="139"/>
    </location>
</feature>
<feature type="strand" evidence="8">
    <location>
        <begin position="142"/>
        <end position="149"/>
    </location>
</feature>
<feature type="strand" evidence="8">
    <location>
        <begin position="153"/>
        <end position="158"/>
    </location>
</feature>
<feature type="helix" evidence="8">
    <location>
        <begin position="159"/>
        <end position="162"/>
    </location>
</feature>
<feature type="strand" evidence="8">
    <location>
        <begin position="165"/>
        <end position="172"/>
    </location>
</feature>
<organism>
    <name type="scientific">Escherichia coli (strain K12)</name>
    <dbReference type="NCBI Taxonomy" id="83333"/>
    <lineage>
        <taxon>Bacteria</taxon>
        <taxon>Pseudomonadati</taxon>
        <taxon>Pseudomonadota</taxon>
        <taxon>Gammaproteobacteria</taxon>
        <taxon>Enterobacterales</taxon>
        <taxon>Enterobacteriaceae</taxon>
        <taxon>Escherichia</taxon>
    </lineage>
</organism>
<dbReference type="EC" id="1.15.1.1"/>
<dbReference type="EMBL" id="U51242">
    <property type="protein sequence ID" value="AAB03729.1"/>
    <property type="molecule type" value="Genomic_DNA"/>
</dbReference>
<dbReference type="EMBL" id="U00096">
    <property type="protein sequence ID" value="AAC74718.1"/>
    <property type="molecule type" value="Genomic_DNA"/>
</dbReference>
<dbReference type="EMBL" id="AP009048">
    <property type="protein sequence ID" value="BAE76489.1"/>
    <property type="molecule type" value="Genomic_DNA"/>
</dbReference>
<dbReference type="EMBL" id="X97766">
    <property type="protein sequence ID" value="CAA66363.1"/>
    <property type="molecule type" value="Genomic_DNA"/>
</dbReference>
<dbReference type="PIR" id="JC6004">
    <property type="entry name" value="JC6004"/>
</dbReference>
<dbReference type="RefSeq" id="NP_416163.1">
    <property type="nucleotide sequence ID" value="NC_000913.3"/>
</dbReference>
<dbReference type="RefSeq" id="WP_001296937.1">
    <property type="nucleotide sequence ID" value="NZ_STEB01000003.1"/>
</dbReference>
<dbReference type="PDB" id="1ESO">
    <property type="method" value="X-ray"/>
    <property type="resolution" value="2.00 A"/>
    <property type="chains" value="A=20-173"/>
</dbReference>
<dbReference type="PDBsum" id="1ESO"/>
<dbReference type="SMR" id="P0AGD1"/>
<dbReference type="BioGRID" id="4259604">
    <property type="interactions" value="26"/>
</dbReference>
<dbReference type="FunCoup" id="P0AGD1">
    <property type="interactions" value="118"/>
</dbReference>
<dbReference type="STRING" id="511145.b1646"/>
<dbReference type="jPOST" id="P0AGD1"/>
<dbReference type="PaxDb" id="511145-b1646"/>
<dbReference type="EnsemblBacteria" id="AAC74718">
    <property type="protein sequence ID" value="AAC74718"/>
    <property type="gene ID" value="b1646"/>
</dbReference>
<dbReference type="GeneID" id="75204491"/>
<dbReference type="GeneID" id="945343"/>
<dbReference type="KEGG" id="ecj:JW1638"/>
<dbReference type="KEGG" id="eco:b1646"/>
<dbReference type="KEGG" id="ecoc:C3026_09450"/>
<dbReference type="PATRIC" id="fig|1411691.4.peg.613"/>
<dbReference type="EchoBASE" id="EB3195"/>
<dbReference type="eggNOG" id="COG2032">
    <property type="taxonomic scope" value="Bacteria"/>
</dbReference>
<dbReference type="HOGENOM" id="CLU_056632_7_1_6"/>
<dbReference type="InParanoid" id="P0AGD1"/>
<dbReference type="OMA" id="GARYACG"/>
<dbReference type="OrthoDB" id="5431326at2"/>
<dbReference type="PhylomeDB" id="P0AGD1"/>
<dbReference type="BioCyc" id="EcoCyc:G6886-MONOMER"/>
<dbReference type="BioCyc" id="MetaCyc:G6886-MONOMER"/>
<dbReference type="EvolutionaryTrace" id="P0AGD1"/>
<dbReference type="PRO" id="PR:P0AGD1"/>
<dbReference type="Proteomes" id="UP000000625">
    <property type="component" value="Chromosome"/>
</dbReference>
<dbReference type="GO" id="GO:0030288">
    <property type="term" value="C:outer membrane-bounded periplasmic space"/>
    <property type="evidence" value="ECO:0000314"/>
    <property type="project" value="EcoCyc"/>
</dbReference>
<dbReference type="GO" id="GO:0042597">
    <property type="term" value="C:periplasmic space"/>
    <property type="evidence" value="ECO:0000314"/>
    <property type="project" value="EcoliWiki"/>
</dbReference>
<dbReference type="GO" id="GO:0005507">
    <property type="term" value="F:copper ion binding"/>
    <property type="evidence" value="ECO:0000314"/>
    <property type="project" value="EcoliWiki"/>
</dbReference>
<dbReference type="GO" id="GO:0004784">
    <property type="term" value="F:superoxide dismutase activity"/>
    <property type="evidence" value="ECO:0000314"/>
    <property type="project" value="EcoliWiki"/>
</dbReference>
<dbReference type="GO" id="GO:0008270">
    <property type="term" value="F:zinc ion binding"/>
    <property type="evidence" value="ECO:0000314"/>
    <property type="project" value="EcoliWiki"/>
</dbReference>
<dbReference type="GO" id="GO:0019430">
    <property type="term" value="P:removal of superoxide radicals"/>
    <property type="evidence" value="ECO:0000318"/>
    <property type="project" value="GO_Central"/>
</dbReference>
<dbReference type="GO" id="GO:0006801">
    <property type="term" value="P:superoxide metabolic process"/>
    <property type="evidence" value="ECO:0000314"/>
    <property type="project" value="EcoliWiki"/>
</dbReference>
<dbReference type="CDD" id="cd00305">
    <property type="entry name" value="Cu-Zn_Superoxide_Dismutase"/>
    <property type="match status" value="1"/>
</dbReference>
<dbReference type="FunFam" id="2.60.40.200:FF:000002">
    <property type="entry name" value="Superoxide dismutase [Cu-Zn]"/>
    <property type="match status" value="1"/>
</dbReference>
<dbReference type="Gene3D" id="2.60.40.200">
    <property type="entry name" value="Superoxide dismutase, copper/zinc binding domain"/>
    <property type="match status" value="1"/>
</dbReference>
<dbReference type="InterPro" id="IPR036423">
    <property type="entry name" value="SOD-like_Cu/Zn_dom_sf"/>
</dbReference>
<dbReference type="InterPro" id="IPR024134">
    <property type="entry name" value="SOD_Cu/Zn_/chaperone"/>
</dbReference>
<dbReference type="InterPro" id="IPR018152">
    <property type="entry name" value="SOD_Cu/Zn_BS"/>
</dbReference>
<dbReference type="InterPro" id="IPR001424">
    <property type="entry name" value="SOD_Cu_Zn_dom"/>
</dbReference>
<dbReference type="NCBIfam" id="NF007628">
    <property type="entry name" value="PRK10290.1"/>
    <property type="match status" value="1"/>
</dbReference>
<dbReference type="PANTHER" id="PTHR10003">
    <property type="entry name" value="SUPEROXIDE DISMUTASE CU-ZN -RELATED"/>
    <property type="match status" value="1"/>
</dbReference>
<dbReference type="Pfam" id="PF00080">
    <property type="entry name" value="Sod_Cu"/>
    <property type="match status" value="1"/>
</dbReference>
<dbReference type="SUPFAM" id="SSF49329">
    <property type="entry name" value="Cu,Zn superoxide dismutase-like"/>
    <property type="match status" value="1"/>
</dbReference>
<dbReference type="PROSITE" id="PS00332">
    <property type="entry name" value="SOD_CU_ZN_2"/>
    <property type="match status" value="1"/>
</dbReference>
<keyword id="KW-0002">3D-structure</keyword>
<keyword id="KW-0049">Antioxidant</keyword>
<keyword id="KW-0186">Copper</keyword>
<keyword id="KW-0903">Direct protein sequencing</keyword>
<keyword id="KW-1015">Disulfide bond</keyword>
<keyword id="KW-0479">Metal-binding</keyword>
<keyword id="KW-0560">Oxidoreductase</keyword>
<keyword id="KW-0574">Periplasm</keyword>
<keyword id="KW-1185">Reference proteome</keyword>
<keyword id="KW-0732">Signal</keyword>
<keyword id="KW-0862">Zinc</keyword>
<evidence type="ECO:0000256" key="1">
    <source>
        <dbReference type="SAM" id="MobiDB-lite"/>
    </source>
</evidence>
<evidence type="ECO:0000269" key="2">
    <source>
    </source>
</evidence>
<evidence type="ECO:0000269" key="3">
    <source>
    </source>
</evidence>
<evidence type="ECO:0000269" key="4">
    <source>
    </source>
</evidence>
<evidence type="ECO:0000269" key="5">
    <source>
    </source>
</evidence>
<evidence type="ECO:0000269" key="6">
    <source>
    </source>
</evidence>
<evidence type="ECO:0000305" key="7"/>
<evidence type="ECO:0007829" key="8">
    <source>
        <dbReference type="PDB" id="1ESO"/>
    </source>
</evidence>
<accession>P0AGD1</accession>
<accession>P53635</accession>
<accession>P96756</accession>
<accession>Q2MB67</accession>
<reference key="1">
    <citation type="journal article" date="1996" name="J. Bacteriol.">
        <title>Cloning and analysis of sodC, encoding the copper-zinc superoxide dismutase of Escherichia coli.</title>
        <authorList>
            <person name="Imlay K.R.C."/>
            <person name="Imlay J.A."/>
        </authorList>
    </citation>
    <scope>NUCLEOTIDE SEQUENCE [GENOMIC DNA]</scope>
    <scope>PROTEIN SEQUENCE OF 20-36</scope>
    <scope>CATALYTIC ACTIVITY</scope>
    <source>
        <strain>K12 / W3110 / ATCC 27325 / DSM 5911</strain>
    </source>
</reference>
<reference key="2">
    <citation type="journal article" date="1997" name="Science">
        <title>The complete genome sequence of Escherichia coli K-12.</title>
        <authorList>
            <person name="Blattner F.R."/>
            <person name="Plunkett G. III"/>
            <person name="Bloch C.A."/>
            <person name="Perna N.T."/>
            <person name="Burland V."/>
            <person name="Riley M."/>
            <person name="Collado-Vides J."/>
            <person name="Glasner J.D."/>
            <person name="Rode C.K."/>
            <person name="Mayhew G.F."/>
            <person name="Gregor J."/>
            <person name="Davis N.W."/>
            <person name="Kirkpatrick H.A."/>
            <person name="Goeden M.A."/>
            <person name="Rose D.J."/>
            <person name="Mau B."/>
            <person name="Shao Y."/>
        </authorList>
    </citation>
    <scope>NUCLEOTIDE SEQUENCE [LARGE SCALE GENOMIC DNA]</scope>
    <source>
        <strain>K12 / MG1655 / ATCC 47076</strain>
    </source>
</reference>
<reference key="3">
    <citation type="journal article" date="2006" name="Mol. Syst. Biol.">
        <title>Highly accurate genome sequences of Escherichia coli K-12 strains MG1655 and W3110.</title>
        <authorList>
            <person name="Hayashi K."/>
            <person name="Morooka N."/>
            <person name="Yamamoto Y."/>
            <person name="Fujita K."/>
            <person name="Isono K."/>
            <person name="Choi S."/>
            <person name="Ohtsubo E."/>
            <person name="Baba T."/>
            <person name="Wanner B.L."/>
            <person name="Mori H."/>
            <person name="Horiuchi T."/>
        </authorList>
    </citation>
    <scope>NUCLEOTIDE SEQUENCE [LARGE SCALE GENOMIC DNA]</scope>
    <source>
        <strain>K12 / W3110 / ATCC 27325 / DSM 5911</strain>
    </source>
</reference>
<reference key="4">
    <citation type="journal article" date="1996" name="Biochem. J.">
        <title>The Cu,Zn superoxide dismutase from Escherichia coli retains monomeric structure at high protein concentration. Evidence for altered subunit interaction in all the bacteriocupreins.</title>
        <authorList>
            <person name="Battistoni A."/>
            <person name="Folcarelli S."/>
            <person name="Gabbianelli R."/>
            <person name="Capo C."/>
            <person name="Rotilio G."/>
        </authorList>
    </citation>
    <scope>NUCLEOTIDE SEQUENCE [GENOMIC DNA] OF 20-173</scope>
    <source>
        <strain>QC871</strain>
    </source>
</reference>
<reference key="5">
    <citation type="journal article" date="1994" name="J. Biol. Chem.">
        <title>Escherichia coli expresses a copper- and zinc-containing superoxide dismutase.</title>
        <authorList>
            <person name="Benov L.T."/>
            <person name="Fridovich I."/>
        </authorList>
    </citation>
    <scope>ACTIVITY REGULATION</scope>
    <scope>CATALYTIC ACTIVITY</scope>
    <scope>BIOPHYSICOCHEMICAL PROPERTIES</scope>
</reference>
<reference key="6">
    <citation type="journal article" date="1995" name="Arch. Biochem. Biophys.">
        <title>Copper, zinc superoxide dismutase in Escherichia coli: periplasmic localization.</title>
        <authorList>
            <person name="Benov L.T."/>
            <person name="Chang L.Y."/>
            <person name="Day B."/>
            <person name="Fridovich I."/>
        </authorList>
    </citation>
    <scope>SUBCELLULAR LOCATION</scope>
</reference>
<reference key="7">
    <citation type="journal article" date="1995" name="FEBS Lett.">
        <title>Isolation of an active and heat-stable monomeric form of Cu,Zn superoxide dismutase from the periplasmic space of Escherichia coli.</title>
        <authorList>
            <person name="Battistoni A."/>
            <person name="Rotilio G."/>
        </authorList>
    </citation>
    <scope>SUBCELLULAR LOCATION</scope>
</reference>
<reference key="8">
    <citation type="journal article" date="1997" name="J. Mol. Biol.">
        <title>Unique structural features of the monomeric Cu,Zn superoxide dismutase from Escherichia coli, revealed by X-ray crystallography.</title>
        <authorList>
            <person name="Pesce A."/>
            <person name="Capasso C."/>
            <person name="Battistoni A."/>
            <person name="Folcarelli S."/>
            <person name="Rotilio G."/>
            <person name="Desideri A."/>
            <person name="Bolognesi M."/>
        </authorList>
    </citation>
    <scope>X-RAY CRYSTALLOGRAPHY (2.0 ANGSTROMS) OF 20-173</scope>
    <scope>DISULFIDE BOND</scope>
</reference>
<proteinExistence type="evidence at protein level"/>
<gene>
    <name type="primary">sodC</name>
    <name type="ordered locus">b1646</name>
    <name type="ordered locus">JW1638</name>
</gene>
<protein>
    <recommendedName>
        <fullName>Superoxide dismutase [Cu-Zn]</fullName>
        <ecNumber>1.15.1.1</ecNumber>
    </recommendedName>
    <alternativeName>
        <fullName>Bacteriocuprein</fullName>
    </alternativeName>
</protein>
<sequence>MKRFSLAILALVVATGAQAASEKVEMNLVTSQGVGQSIGSVTITETDKGLEFSPDLKALPPGEHGFHIHAKGSCQPATKDGKASAAESAGGHLDPQNTGKHEGPEGAGHLGDLPALVVNNDGKATDAVIAPRLKSLDEIKDKALMVHVGGDNMSDQPKPLGGGGERYACGVIK</sequence>
<name>SODC_ECOLI</name>
<comment type="function">
    <text>Destroys radicals which are normally produced within the cells and which are toxic to biological systems.</text>
</comment>
<comment type="catalytic activity">
    <reaction evidence="4 5">
        <text>2 superoxide + 2 H(+) = H2O2 + O2</text>
        <dbReference type="Rhea" id="RHEA:20696"/>
        <dbReference type="ChEBI" id="CHEBI:15378"/>
        <dbReference type="ChEBI" id="CHEBI:15379"/>
        <dbReference type="ChEBI" id="CHEBI:16240"/>
        <dbReference type="ChEBI" id="CHEBI:18421"/>
        <dbReference type="EC" id="1.15.1.1"/>
    </reaction>
</comment>
<comment type="cofactor">
    <cofactor>
        <name>Cu cation</name>
        <dbReference type="ChEBI" id="CHEBI:23378"/>
    </cofactor>
    <text>Binds 1 copper ion per subunit.</text>
</comment>
<comment type="cofactor">
    <cofactor>
        <name>Zn(2+)</name>
        <dbReference type="ChEBI" id="CHEBI:29105"/>
    </cofactor>
    <text>Binds 1 zinc ion per subunit.</text>
</comment>
<comment type="activity regulation">
    <text evidence="4">Inactivated by diethyldithiocarbamate (PubMed:7929223). Inhibited by cyanide (PubMed:7929223).</text>
</comment>
<comment type="biophysicochemical properties">
    <phDependence>
        <text evidence="4">Optimum pH is 6.8.</text>
    </phDependence>
    <temperatureDependence>
        <text>Highly thermostable.</text>
    </temperatureDependence>
</comment>
<comment type="subunit">
    <text>Monomer.</text>
</comment>
<comment type="subcellular location">
    <subcellularLocation>
        <location evidence="2 3">Periplasm</location>
    </subcellularLocation>
</comment>
<comment type="similarity">
    <text evidence="7">Belongs to the Cu-Zn superoxide dismutase family.</text>
</comment>